<sequence>MTGDAPQSAPQHRGSPAPAHVPVMLERVVELLAPALQQPGAIAVDGTLGLGGHAEALLRAHPGLRLVGVDRDTTALERARQRLAPYADRIDLVHAVYSDIPRILDELGIDRVHGLLFDLGVSSPQLDEAERGFAYSYDAPLDMRMDRTQERTAADIVNTYPASELTRIFRVYGEERFAARIAQAIVRQRAKEPVRTTGVLADLVRSAIPAAARRSGGHPAKRAFQALRIEVNSELSILERALPAALSRLAVAGRIVVLSYHSLEDRITKRVLTELSTDSTPPGLPVPLPDRQPELRLLTRGAELPTEQETAANPRAASARLRAAERTREP</sequence>
<proteinExistence type="inferred from homology"/>
<feature type="chain" id="PRO_0000223570" description="Ribosomal RNA small subunit methyltransferase H">
    <location>
        <begin position="1"/>
        <end position="330"/>
    </location>
</feature>
<feature type="region of interest" description="Disordered" evidence="2">
    <location>
        <begin position="276"/>
        <end position="330"/>
    </location>
</feature>
<feature type="compositionally biased region" description="Low complexity" evidence="2">
    <location>
        <begin position="311"/>
        <end position="321"/>
    </location>
</feature>
<feature type="binding site" evidence="1">
    <location>
        <begin position="51"/>
        <end position="53"/>
    </location>
    <ligand>
        <name>S-adenosyl-L-methionine</name>
        <dbReference type="ChEBI" id="CHEBI:59789"/>
    </ligand>
</feature>
<feature type="binding site" evidence="1">
    <location>
        <position position="70"/>
    </location>
    <ligand>
        <name>S-adenosyl-L-methionine</name>
        <dbReference type="ChEBI" id="CHEBI:59789"/>
    </ligand>
</feature>
<feature type="binding site" evidence="1">
    <location>
        <position position="118"/>
    </location>
    <ligand>
        <name>S-adenosyl-L-methionine</name>
        <dbReference type="ChEBI" id="CHEBI:59789"/>
    </ligand>
</feature>
<feature type="binding site" evidence="1">
    <location>
        <position position="125"/>
    </location>
    <ligand>
        <name>S-adenosyl-L-methionine</name>
        <dbReference type="ChEBI" id="CHEBI:59789"/>
    </ligand>
</feature>
<name>RSMH_THEFY</name>
<gene>
    <name evidence="1" type="primary">rsmH</name>
    <name type="synonym">mraW</name>
    <name type="ordered locus">Tfu_1102</name>
</gene>
<dbReference type="EC" id="2.1.1.199" evidence="1"/>
<dbReference type="EMBL" id="CP000088">
    <property type="protein sequence ID" value="AAZ55140.1"/>
    <property type="molecule type" value="Genomic_DNA"/>
</dbReference>
<dbReference type="RefSeq" id="WP_011291549.1">
    <property type="nucleotide sequence ID" value="NC_007333.1"/>
</dbReference>
<dbReference type="SMR" id="Q47QX7"/>
<dbReference type="STRING" id="269800.Tfu_1102"/>
<dbReference type="KEGG" id="tfu:Tfu_1102"/>
<dbReference type="eggNOG" id="COG0275">
    <property type="taxonomic scope" value="Bacteria"/>
</dbReference>
<dbReference type="HOGENOM" id="CLU_038422_0_0_11"/>
<dbReference type="OrthoDB" id="9806637at2"/>
<dbReference type="GO" id="GO:0005737">
    <property type="term" value="C:cytoplasm"/>
    <property type="evidence" value="ECO:0007669"/>
    <property type="project" value="UniProtKB-SubCell"/>
</dbReference>
<dbReference type="GO" id="GO:0071424">
    <property type="term" value="F:rRNA (cytosine-N4-)-methyltransferase activity"/>
    <property type="evidence" value="ECO:0007669"/>
    <property type="project" value="UniProtKB-UniRule"/>
</dbReference>
<dbReference type="GO" id="GO:0070475">
    <property type="term" value="P:rRNA base methylation"/>
    <property type="evidence" value="ECO:0007669"/>
    <property type="project" value="UniProtKB-UniRule"/>
</dbReference>
<dbReference type="FunFam" id="1.10.150.170:FF:000001">
    <property type="entry name" value="Ribosomal RNA small subunit methyltransferase H"/>
    <property type="match status" value="1"/>
</dbReference>
<dbReference type="Gene3D" id="1.10.150.170">
    <property type="entry name" value="Putative methyltransferase TM0872, insert domain"/>
    <property type="match status" value="1"/>
</dbReference>
<dbReference type="Gene3D" id="3.40.50.150">
    <property type="entry name" value="Vaccinia Virus protein VP39"/>
    <property type="match status" value="1"/>
</dbReference>
<dbReference type="HAMAP" id="MF_01007">
    <property type="entry name" value="16SrRNA_methyltr_H"/>
    <property type="match status" value="1"/>
</dbReference>
<dbReference type="InterPro" id="IPR002903">
    <property type="entry name" value="RsmH"/>
</dbReference>
<dbReference type="InterPro" id="IPR023397">
    <property type="entry name" value="SAM-dep_MeTrfase_MraW_recog"/>
</dbReference>
<dbReference type="InterPro" id="IPR029063">
    <property type="entry name" value="SAM-dependent_MTases_sf"/>
</dbReference>
<dbReference type="NCBIfam" id="TIGR00006">
    <property type="entry name" value="16S rRNA (cytosine(1402)-N(4))-methyltransferase RsmH"/>
    <property type="match status" value="1"/>
</dbReference>
<dbReference type="PANTHER" id="PTHR11265:SF0">
    <property type="entry name" value="12S RRNA N4-METHYLCYTIDINE METHYLTRANSFERASE"/>
    <property type="match status" value="1"/>
</dbReference>
<dbReference type="PANTHER" id="PTHR11265">
    <property type="entry name" value="S-ADENOSYL-METHYLTRANSFERASE MRAW"/>
    <property type="match status" value="1"/>
</dbReference>
<dbReference type="Pfam" id="PF01795">
    <property type="entry name" value="Methyltransf_5"/>
    <property type="match status" value="1"/>
</dbReference>
<dbReference type="PIRSF" id="PIRSF004486">
    <property type="entry name" value="MraW"/>
    <property type="match status" value="1"/>
</dbReference>
<dbReference type="SUPFAM" id="SSF81799">
    <property type="entry name" value="Putative methyltransferase TM0872, insert domain"/>
    <property type="match status" value="1"/>
</dbReference>
<dbReference type="SUPFAM" id="SSF53335">
    <property type="entry name" value="S-adenosyl-L-methionine-dependent methyltransferases"/>
    <property type="match status" value="1"/>
</dbReference>
<organism>
    <name type="scientific">Thermobifida fusca (strain YX)</name>
    <dbReference type="NCBI Taxonomy" id="269800"/>
    <lineage>
        <taxon>Bacteria</taxon>
        <taxon>Bacillati</taxon>
        <taxon>Actinomycetota</taxon>
        <taxon>Actinomycetes</taxon>
        <taxon>Streptosporangiales</taxon>
        <taxon>Nocardiopsidaceae</taxon>
        <taxon>Thermobifida</taxon>
    </lineage>
</organism>
<keyword id="KW-0963">Cytoplasm</keyword>
<keyword id="KW-0489">Methyltransferase</keyword>
<keyword id="KW-0698">rRNA processing</keyword>
<keyword id="KW-0949">S-adenosyl-L-methionine</keyword>
<keyword id="KW-0808">Transferase</keyword>
<evidence type="ECO:0000255" key="1">
    <source>
        <dbReference type="HAMAP-Rule" id="MF_01007"/>
    </source>
</evidence>
<evidence type="ECO:0000256" key="2">
    <source>
        <dbReference type="SAM" id="MobiDB-lite"/>
    </source>
</evidence>
<protein>
    <recommendedName>
        <fullName evidence="1">Ribosomal RNA small subunit methyltransferase H</fullName>
        <ecNumber evidence="1">2.1.1.199</ecNumber>
    </recommendedName>
    <alternativeName>
        <fullName evidence="1">16S rRNA m(4)C1402 methyltransferase</fullName>
    </alternativeName>
    <alternativeName>
        <fullName evidence="1">rRNA (cytosine-N(4)-)-methyltransferase RsmH</fullName>
    </alternativeName>
</protein>
<accession>Q47QX7</accession>
<reference key="1">
    <citation type="journal article" date="2007" name="J. Bacteriol.">
        <title>Genome sequence and analysis of the soil cellulolytic actinomycete Thermobifida fusca YX.</title>
        <authorList>
            <person name="Lykidis A."/>
            <person name="Mavromatis K."/>
            <person name="Ivanova N."/>
            <person name="Anderson I."/>
            <person name="Land M."/>
            <person name="DiBartolo G."/>
            <person name="Martinez M."/>
            <person name="Lapidus A."/>
            <person name="Lucas S."/>
            <person name="Copeland A."/>
            <person name="Richardson P."/>
            <person name="Wilson D.B."/>
            <person name="Kyrpides N."/>
        </authorList>
    </citation>
    <scope>NUCLEOTIDE SEQUENCE [LARGE SCALE GENOMIC DNA]</scope>
    <source>
        <strain>YX</strain>
    </source>
</reference>
<comment type="function">
    <text evidence="1">Specifically methylates the N4 position of cytidine in position 1402 (C1402) of 16S rRNA.</text>
</comment>
<comment type="catalytic activity">
    <reaction evidence="1">
        <text>cytidine(1402) in 16S rRNA + S-adenosyl-L-methionine = N(4)-methylcytidine(1402) in 16S rRNA + S-adenosyl-L-homocysteine + H(+)</text>
        <dbReference type="Rhea" id="RHEA:42928"/>
        <dbReference type="Rhea" id="RHEA-COMP:10286"/>
        <dbReference type="Rhea" id="RHEA-COMP:10287"/>
        <dbReference type="ChEBI" id="CHEBI:15378"/>
        <dbReference type="ChEBI" id="CHEBI:57856"/>
        <dbReference type="ChEBI" id="CHEBI:59789"/>
        <dbReference type="ChEBI" id="CHEBI:74506"/>
        <dbReference type="ChEBI" id="CHEBI:82748"/>
        <dbReference type="EC" id="2.1.1.199"/>
    </reaction>
</comment>
<comment type="subcellular location">
    <subcellularLocation>
        <location evidence="1">Cytoplasm</location>
    </subcellularLocation>
</comment>
<comment type="similarity">
    <text evidence="1">Belongs to the methyltransferase superfamily. RsmH family.</text>
</comment>